<accession>A6WMW5</accession>
<name>GLO2_SHEB8</name>
<feature type="chain" id="PRO_1000144804" description="Hydroxyacylglutathione hydrolase">
    <location>
        <begin position="1"/>
        <end position="263"/>
    </location>
</feature>
<feature type="binding site" evidence="1">
    <location>
        <position position="55"/>
    </location>
    <ligand>
        <name>Zn(2+)</name>
        <dbReference type="ChEBI" id="CHEBI:29105"/>
        <label>1</label>
    </ligand>
</feature>
<feature type="binding site" evidence="1">
    <location>
        <position position="57"/>
    </location>
    <ligand>
        <name>Zn(2+)</name>
        <dbReference type="ChEBI" id="CHEBI:29105"/>
        <label>1</label>
    </ligand>
</feature>
<feature type="binding site" evidence="1">
    <location>
        <position position="59"/>
    </location>
    <ligand>
        <name>Zn(2+)</name>
        <dbReference type="ChEBI" id="CHEBI:29105"/>
        <label>2</label>
    </ligand>
</feature>
<feature type="binding site" evidence="1">
    <location>
        <position position="60"/>
    </location>
    <ligand>
        <name>Zn(2+)</name>
        <dbReference type="ChEBI" id="CHEBI:29105"/>
        <label>2</label>
    </ligand>
</feature>
<feature type="binding site" evidence="1">
    <location>
        <position position="117"/>
    </location>
    <ligand>
        <name>Zn(2+)</name>
        <dbReference type="ChEBI" id="CHEBI:29105"/>
        <label>1</label>
    </ligand>
</feature>
<feature type="binding site" evidence="1">
    <location>
        <position position="134"/>
    </location>
    <ligand>
        <name>Zn(2+)</name>
        <dbReference type="ChEBI" id="CHEBI:29105"/>
        <label>1</label>
    </ligand>
</feature>
<feature type="binding site" evidence="1">
    <location>
        <position position="134"/>
    </location>
    <ligand>
        <name>Zn(2+)</name>
        <dbReference type="ChEBI" id="CHEBI:29105"/>
        <label>2</label>
    </ligand>
</feature>
<feature type="binding site" evidence="1">
    <location>
        <position position="172"/>
    </location>
    <ligand>
        <name>Zn(2+)</name>
        <dbReference type="ChEBI" id="CHEBI:29105"/>
        <label>2</label>
    </ligand>
</feature>
<reference key="1">
    <citation type="submission" date="2007-07" db="EMBL/GenBank/DDBJ databases">
        <title>Complete sequence of chromosome of Shewanella baltica OS185.</title>
        <authorList>
            <consortium name="US DOE Joint Genome Institute"/>
            <person name="Copeland A."/>
            <person name="Lucas S."/>
            <person name="Lapidus A."/>
            <person name="Barry K."/>
            <person name="Glavina del Rio T."/>
            <person name="Dalin E."/>
            <person name="Tice H."/>
            <person name="Pitluck S."/>
            <person name="Sims D."/>
            <person name="Brettin T."/>
            <person name="Bruce D."/>
            <person name="Detter J.C."/>
            <person name="Han C."/>
            <person name="Schmutz J."/>
            <person name="Larimer F."/>
            <person name="Land M."/>
            <person name="Hauser L."/>
            <person name="Kyrpides N."/>
            <person name="Mikhailova N."/>
            <person name="Brettar I."/>
            <person name="Rodrigues J."/>
            <person name="Konstantinidis K."/>
            <person name="Tiedje J."/>
            <person name="Richardson P."/>
        </authorList>
    </citation>
    <scope>NUCLEOTIDE SEQUENCE [LARGE SCALE GENOMIC DNA]</scope>
    <source>
        <strain>OS185</strain>
    </source>
</reference>
<organism>
    <name type="scientific">Shewanella baltica (strain OS185)</name>
    <dbReference type="NCBI Taxonomy" id="402882"/>
    <lineage>
        <taxon>Bacteria</taxon>
        <taxon>Pseudomonadati</taxon>
        <taxon>Pseudomonadota</taxon>
        <taxon>Gammaproteobacteria</taxon>
        <taxon>Alteromonadales</taxon>
        <taxon>Shewanellaceae</taxon>
        <taxon>Shewanella</taxon>
    </lineage>
</organism>
<keyword id="KW-0378">Hydrolase</keyword>
<keyword id="KW-0479">Metal-binding</keyword>
<keyword id="KW-0862">Zinc</keyword>
<comment type="function">
    <text evidence="1">Thiolesterase that catalyzes the hydrolysis of S-D-lactoyl-glutathione to form glutathione and D-lactic acid.</text>
</comment>
<comment type="catalytic activity">
    <reaction evidence="1">
        <text>an S-(2-hydroxyacyl)glutathione + H2O = a 2-hydroxy carboxylate + glutathione + H(+)</text>
        <dbReference type="Rhea" id="RHEA:21864"/>
        <dbReference type="ChEBI" id="CHEBI:15377"/>
        <dbReference type="ChEBI" id="CHEBI:15378"/>
        <dbReference type="ChEBI" id="CHEBI:57925"/>
        <dbReference type="ChEBI" id="CHEBI:58896"/>
        <dbReference type="ChEBI" id="CHEBI:71261"/>
        <dbReference type="EC" id="3.1.2.6"/>
    </reaction>
</comment>
<comment type="cofactor">
    <cofactor evidence="1">
        <name>Zn(2+)</name>
        <dbReference type="ChEBI" id="CHEBI:29105"/>
    </cofactor>
    <text evidence="1">Binds 2 Zn(2+) ions per subunit.</text>
</comment>
<comment type="pathway">
    <text evidence="1">Secondary metabolite metabolism; methylglyoxal degradation; (R)-lactate from methylglyoxal: step 2/2.</text>
</comment>
<comment type="subunit">
    <text evidence="1">Monomer.</text>
</comment>
<comment type="similarity">
    <text evidence="1">Belongs to the metallo-beta-lactamase superfamily. Glyoxalase II family.</text>
</comment>
<evidence type="ECO:0000255" key="1">
    <source>
        <dbReference type="HAMAP-Rule" id="MF_01374"/>
    </source>
</evidence>
<gene>
    <name evidence="1" type="primary">gloB</name>
    <name type="ordered locus">Shew185_2011</name>
</gene>
<proteinExistence type="inferred from homology"/>
<dbReference type="EC" id="3.1.2.6" evidence="1"/>
<dbReference type="EMBL" id="CP000753">
    <property type="protein sequence ID" value="ABS08154.1"/>
    <property type="molecule type" value="Genomic_DNA"/>
</dbReference>
<dbReference type="RefSeq" id="WP_012089093.1">
    <property type="nucleotide sequence ID" value="NC_009665.1"/>
</dbReference>
<dbReference type="SMR" id="A6WMW5"/>
<dbReference type="KEGG" id="sbm:Shew185_2011"/>
<dbReference type="HOGENOM" id="CLU_030571_4_1_6"/>
<dbReference type="UniPathway" id="UPA00619">
    <property type="reaction ID" value="UER00676"/>
</dbReference>
<dbReference type="GO" id="GO:0004416">
    <property type="term" value="F:hydroxyacylglutathione hydrolase activity"/>
    <property type="evidence" value="ECO:0007669"/>
    <property type="project" value="UniProtKB-UniRule"/>
</dbReference>
<dbReference type="GO" id="GO:0046872">
    <property type="term" value="F:metal ion binding"/>
    <property type="evidence" value="ECO:0007669"/>
    <property type="project" value="UniProtKB-KW"/>
</dbReference>
<dbReference type="GO" id="GO:0019243">
    <property type="term" value="P:methylglyoxal catabolic process to D-lactate via S-lactoyl-glutathione"/>
    <property type="evidence" value="ECO:0007669"/>
    <property type="project" value="InterPro"/>
</dbReference>
<dbReference type="CDD" id="cd07723">
    <property type="entry name" value="hydroxyacylglutathione_hydrolase_MBL-fold"/>
    <property type="match status" value="1"/>
</dbReference>
<dbReference type="Gene3D" id="3.60.15.10">
    <property type="entry name" value="Ribonuclease Z/Hydroxyacylglutathione hydrolase-like"/>
    <property type="match status" value="1"/>
</dbReference>
<dbReference type="HAMAP" id="MF_01374">
    <property type="entry name" value="Glyoxalase_2"/>
    <property type="match status" value="1"/>
</dbReference>
<dbReference type="InterPro" id="IPR035680">
    <property type="entry name" value="Clx_II_MBL"/>
</dbReference>
<dbReference type="InterPro" id="IPR050110">
    <property type="entry name" value="Glyoxalase_II_hydrolase"/>
</dbReference>
<dbReference type="InterPro" id="IPR032282">
    <property type="entry name" value="HAGH_C"/>
</dbReference>
<dbReference type="InterPro" id="IPR017782">
    <property type="entry name" value="Hydroxyacylglutathione_Hdrlase"/>
</dbReference>
<dbReference type="InterPro" id="IPR001279">
    <property type="entry name" value="Metallo-B-lactamas"/>
</dbReference>
<dbReference type="InterPro" id="IPR036866">
    <property type="entry name" value="RibonucZ/Hydroxyglut_hydro"/>
</dbReference>
<dbReference type="NCBIfam" id="TIGR03413">
    <property type="entry name" value="GSH_gloB"/>
    <property type="match status" value="1"/>
</dbReference>
<dbReference type="PANTHER" id="PTHR43705">
    <property type="entry name" value="HYDROXYACYLGLUTATHIONE HYDROLASE"/>
    <property type="match status" value="1"/>
</dbReference>
<dbReference type="PANTHER" id="PTHR43705:SF1">
    <property type="entry name" value="HYDROXYACYLGLUTATHIONE HYDROLASE GLOB"/>
    <property type="match status" value="1"/>
</dbReference>
<dbReference type="Pfam" id="PF16123">
    <property type="entry name" value="HAGH_C"/>
    <property type="match status" value="1"/>
</dbReference>
<dbReference type="Pfam" id="PF00753">
    <property type="entry name" value="Lactamase_B"/>
    <property type="match status" value="2"/>
</dbReference>
<dbReference type="PIRSF" id="PIRSF005457">
    <property type="entry name" value="Glx"/>
    <property type="match status" value="1"/>
</dbReference>
<dbReference type="SMART" id="SM00849">
    <property type="entry name" value="Lactamase_B"/>
    <property type="match status" value="1"/>
</dbReference>
<dbReference type="SUPFAM" id="SSF56281">
    <property type="entry name" value="Metallo-hydrolase/oxidoreductase"/>
    <property type="match status" value="1"/>
</dbReference>
<sequence>MLTITAIKAFNDNYIWVLQQQPHTQVYVVDPGDASVVIDYLEANKLTLAGILLTHHHNDHTGGVAELQAYSQNRLSVYGPDNEKIEGITHPLHATAQPRFILDYMSGELQVLDVPGHTAGHIAYVIADALFCGDTLFSGGCGRLFEGTPAQMLNSLQQLAQLPADTRVYCAHEYTLSNLKFALAVNPNNRALQDYNERAIALRRQEKATIPSTIALERAINPFLRASDTEIVDSIKQHFSDLNHANLDELGGFTLLRQWKDNF</sequence>
<protein>
    <recommendedName>
        <fullName evidence="1">Hydroxyacylglutathione hydrolase</fullName>
        <ecNumber evidence="1">3.1.2.6</ecNumber>
    </recommendedName>
    <alternativeName>
        <fullName evidence="1">Glyoxalase II</fullName>
        <shortName evidence="1">Glx II</shortName>
    </alternativeName>
</protein>